<sequence length="449" mass="52075">MVSPETSSSHYQSSPMAKYAGTRTRPVVCISDVVLFLGGAFMSLILVWSFFSFSSISPNLTVKNEESSNKCSSGIDMSQDPTDPVYYDDPDLTYTIEKPVKNWDEKRRRWLNLHPSFIPGAENRTVMVTGSQSAPCKNPIGDHLLLRFFKNKVDYCRIHGHDIFYSNALLHPKMNSYWAKLPAVKAAMIAHPEAEWIWWVDSDALFTDMDFTPPWRRYKEHNLVVHGWPGVIYNDRSWTALNAGVFLIRNCQWSMELIDTWTGMGPVSPEYAKWGQIQRSIFKDKLFPESDDQTALLYLLYKHREVYYPKIYLEGDFYFEGYWLEIVPGLSNVTERYLEMEREDATLRRRHAEKVSERYAAFREERFLKGERGGKGSKRRPFVTHFTGCQPCSGDHNKMYDGDTCWNGMIKAINFADNQVMRKYGFVHSDLGKTSPLQPVPFDYPDEPW</sequence>
<proteinExistence type="evidence at transcript level"/>
<reference key="1">
    <citation type="journal article" date="2014" name="Plant J.">
        <title>The plant glycosyltransferase clone collection for functional genomics.</title>
        <authorList>
            <person name="Lao J."/>
            <person name="Oikawa A."/>
            <person name="Bromley J.R."/>
            <person name="McInerney P."/>
            <person name="Suttangkakul A."/>
            <person name="Smith-Moritz A.M."/>
            <person name="Plahar H."/>
            <person name="Chiu T.-Y."/>
            <person name="Gonzalez Fernandez-Nino S.M.G."/>
            <person name="Ebert B."/>
            <person name="Yang F."/>
            <person name="Christiansen K.M."/>
            <person name="Hansen S.F."/>
            <person name="Stonebloom S."/>
            <person name="Adams P.D."/>
            <person name="Ronald P.C."/>
            <person name="Hillson N.J."/>
            <person name="Hadi M.Z."/>
            <person name="Vega-Sanchez M.E."/>
            <person name="Loque D."/>
            <person name="Scheller H.V."/>
            <person name="Heazlewood J.L."/>
        </authorList>
    </citation>
    <scope>NUCLEOTIDE SEQUENCE [MRNA]</scope>
    <source>
        <strain>cv. Columbia</strain>
    </source>
</reference>
<reference key="2">
    <citation type="submission" date="1999-08" db="EMBL/GenBank/DDBJ databases">
        <title>A novel Arabidopsis Golgi glycosyltransferase.</title>
        <authorList>
            <person name="Mogelsvang S."/>
            <person name="Dupree P."/>
        </authorList>
    </citation>
    <scope>NUCLEOTIDE SEQUENCE [MRNA]</scope>
    <source>
        <strain>cv. Columbia</strain>
    </source>
</reference>
<reference key="3">
    <citation type="journal article" date="1999" name="Nature">
        <title>Sequence and analysis of chromosome 2 of the plant Arabidopsis thaliana.</title>
        <authorList>
            <person name="Lin X."/>
            <person name="Kaul S."/>
            <person name="Rounsley S.D."/>
            <person name="Shea T.P."/>
            <person name="Benito M.-I."/>
            <person name="Town C.D."/>
            <person name="Fujii C.Y."/>
            <person name="Mason T.M."/>
            <person name="Bowman C.L."/>
            <person name="Barnstead M.E."/>
            <person name="Feldblyum T.V."/>
            <person name="Buell C.R."/>
            <person name="Ketchum K.A."/>
            <person name="Lee J.J."/>
            <person name="Ronning C.M."/>
            <person name="Koo H.L."/>
            <person name="Moffat K.S."/>
            <person name="Cronin L.A."/>
            <person name="Shen M."/>
            <person name="Pai G."/>
            <person name="Van Aken S."/>
            <person name="Umayam L."/>
            <person name="Tallon L.J."/>
            <person name="Gill J.E."/>
            <person name="Adams M.D."/>
            <person name="Carrera A.J."/>
            <person name="Creasy T.H."/>
            <person name="Goodman H.M."/>
            <person name="Somerville C.R."/>
            <person name="Copenhaver G.P."/>
            <person name="Preuss D."/>
            <person name="Nierman W.C."/>
            <person name="White O."/>
            <person name="Eisen J.A."/>
            <person name="Salzberg S.L."/>
            <person name="Fraser C.M."/>
            <person name="Venter J.C."/>
        </authorList>
    </citation>
    <scope>NUCLEOTIDE SEQUENCE [LARGE SCALE GENOMIC DNA]</scope>
    <source>
        <strain>cv. Columbia</strain>
    </source>
</reference>
<reference key="4">
    <citation type="journal article" date="2017" name="Plant J.">
        <title>Araport11: a complete reannotation of the Arabidopsis thaliana reference genome.</title>
        <authorList>
            <person name="Cheng C.Y."/>
            <person name="Krishnakumar V."/>
            <person name="Chan A.P."/>
            <person name="Thibaud-Nissen F."/>
            <person name="Schobel S."/>
            <person name="Town C.D."/>
        </authorList>
    </citation>
    <scope>GENOME REANNOTATION</scope>
    <source>
        <strain>cv. Columbia</strain>
    </source>
</reference>
<reference key="5">
    <citation type="journal article" date="2003" name="Science">
        <title>Empirical analysis of transcriptional activity in the Arabidopsis genome.</title>
        <authorList>
            <person name="Yamada K."/>
            <person name="Lim J."/>
            <person name="Dale J.M."/>
            <person name="Chen H."/>
            <person name="Shinn P."/>
            <person name="Palm C.J."/>
            <person name="Southwick A.M."/>
            <person name="Wu H.C."/>
            <person name="Kim C.J."/>
            <person name="Nguyen M."/>
            <person name="Pham P.K."/>
            <person name="Cheuk R.F."/>
            <person name="Karlin-Newmann G."/>
            <person name="Liu S.X."/>
            <person name="Lam B."/>
            <person name="Sakano H."/>
            <person name="Wu T."/>
            <person name="Yu G."/>
            <person name="Miranda M."/>
            <person name="Quach H.L."/>
            <person name="Tripp M."/>
            <person name="Chang C.H."/>
            <person name="Lee J.M."/>
            <person name="Toriumi M.J."/>
            <person name="Chan M.M."/>
            <person name="Tang C.C."/>
            <person name="Onodera C.S."/>
            <person name="Deng J.M."/>
            <person name="Akiyama K."/>
            <person name="Ansari Y."/>
            <person name="Arakawa T."/>
            <person name="Banh J."/>
            <person name="Banno F."/>
            <person name="Bowser L."/>
            <person name="Brooks S.Y."/>
            <person name="Carninci P."/>
            <person name="Chao Q."/>
            <person name="Choy N."/>
            <person name="Enju A."/>
            <person name="Goldsmith A.D."/>
            <person name="Gurjal M."/>
            <person name="Hansen N.F."/>
            <person name="Hayashizaki Y."/>
            <person name="Johnson-Hopson C."/>
            <person name="Hsuan V.W."/>
            <person name="Iida K."/>
            <person name="Karnes M."/>
            <person name="Khan S."/>
            <person name="Koesema E."/>
            <person name="Ishida J."/>
            <person name="Jiang P.X."/>
            <person name="Jones T."/>
            <person name="Kawai J."/>
            <person name="Kamiya A."/>
            <person name="Meyers C."/>
            <person name="Nakajima M."/>
            <person name="Narusaka M."/>
            <person name="Seki M."/>
            <person name="Sakurai T."/>
            <person name="Satou M."/>
            <person name="Tamse R."/>
            <person name="Vaysberg M."/>
            <person name="Wallender E.K."/>
            <person name="Wong C."/>
            <person name="Yamamura Y."/>
            <person name="Yuan S."/>
            <person name="Shinozaki K."/>
            <person name="Davis R.W."/>
            <person name="Theologis A."/>
            <person name="Ecker J.R."/>
        </authorList>
    </citation>
    <scope>NUCLEOTIDE SEQUENCE [LARGE SCALE MRNA]</scope>
    <source>
        <strain>cv. Columbia</strain>
    </source>
</reference>
<reference key="6">
    <citation type="journal article" date="2002" name="Proc. Natl. Acad. Sci. U.S.A.">
        <title>An Arabidopsis gene encoding an alpha-xylosyltransferase involved in xyloglucan biosynthesis.</title>
        <authorList>
            <person name="Faik A."/>
            <person name="Price N.J."/>
            <person name="Raikhel N.V."/>
            <person name="Keegstra K."/>
        </authorList>
    </citation>
    <scope>GENE FAMILY</scope>
    <scope>NOMENCLATURE</scope>
</reference>
<protein>
    <recommendedName>
        <fullName>Putative glycosyltransferase 7</fullName>
        <shortName>AtGT7</shortName>
        <ecNumber>2.4.-.-</ecNumber>
    </recommendedName>
</protein>
<organism>
    <name type="scientific">Arabidopsis thaliana</name>
    <name type="common">Mouse-ear cress</name>
    <dbReference type="NCBI Taxonomy" id="3702"/>
    <lineage>
        <taxon>Eukaryota</taxon>
        <taxon>Viridiplantae</taxon>
        <taxon>Streptophyta</taxon>
        <taxon>Embryophyta</taxon>
        <taxon>Tracheophyta</taxon>
        <taxon>Spermatophyta</taxon>
        <taxon>Magnoliopsida</taxon>
        <taxon>eudicotyledons</taxon>
        <taxon>Gunneridae</taxon>
        <taxon>Pentapetalae</taxon>
        <taxon>rosids</taxon>
        <taxon>malvids</taxon>
        <taxon>Brassicales</taxon>
        <taxon>Brassicaceae</taxon>
        <taxon>Camelineae</taxon>
        <taxon>Arabidopsis</taxon>
    </lineage>
</organism>
<dbReference type="EC" id="2.4.-.-"/>
<dbReference type="EMBL" id="KJ138905">
    <property type="protein sequence ID" value="AHL38845.1"/>
    <property type="molecule type" value="mRNA"/>
</dbReference>
<dbReference type="EMBL" id="AJ245572">
    <property type="protein sequence ID" value="CAC01675.1"/>
    <property type="molecule type" value="mRNA"/>
</dbReference>
<dbReference type="EMBL" id="AC004786">
    <property type="protein sequence ID" value="AAC32437.1"/>
    <property type="molecule type" value="Genomic_DNA"/>
</dbReference>
<dbReference type="EMBL" id="CP002685">
    <property type="protein sequence ID" value="AEC07370.1"/>
    <property type="molecule type" value="Genomic_DNA"/>
</dbReference>
<dbReference type="EMBL" id="AY059095">
    <property type="protein sequence ID" value="AAL15201.1"/>
    <property type="molecule type" value="mRNA"/>
</dbReference>
<dbReference type="EMBL" id="AY035024">
    <property type="protein sequence ID" value="AAK59529.1"/>
    <property type="molecule type" value="mRNA"/>
</dbReference>
<dbReference type="PIR" id="C84618">
    <property type="entry name" value="C84618"/>
</dbReference>
<dbReference type="RefSeq" id="NP_565544.1">
    <property type="nucleotide sequence ID" value="NM_127855.3"/>
</dbReference>
<dbReference type="SMR" id="O81007"/>
<dbReference type="FunCoup" id="O81007">
    <property type="interactions" value="99"/>
</dbReference>
<dbReference type="STRING" id="3702.O81007"/>
<dbReference type="CAZy" id="GT34">
    <property type="family name" value="Glycosyltransferase Family 34"/>
</dbReference>
<dbReference type="GlyCosmos" id="O81007">
    <property type="glycosylation" value="3 sites, No reported glycans"/>
</dbReference>
<dbReference type="GlyGen" id="O81007">
    <property type="glycosylation" value="3 sites"/>
</dbReference>
<dbReference type="iPTMnet" id="O81007"/>
<dbReference type="PaxDb" id="3702-AT2G22900.1"/>
<dbReference type="ProteomicsDB" id="247311"/>
<dbReference type="EnsemblPlants" id="AT2G22900.1">
    <property type="protein sequence ID" value="AT2G22900.1"/>
    <property type="gene ID" value="AT2G22900"/>
</dbReference>
<dbReference type="GeneID" id="816821"/>
<dbReference type="Gramene" id="AT2G22900.1">
    <property type="protein sequence ID" value="AT2G22900.1"/>
    <property type="gene ID" value="AT2G22900"/>
</dbReference>
<dbReference type="KEGG" id="ath:AT2G22900"/>
<dbReference type="Araport" id="AT2G22900"/>
<dbReference type="TAIR" id="AT2G22900">
    <property type="gene designation" value="MUCI10"/>
</dbReference>
<dbReference type="eggNOG" id="KOG4748">
    <property type="taxonomic scope" value="Eukaryota"/>
</dbReference>
<dbReference type="HOGENOM" id="CLU_034328_0_0_1"/>
<dbReference type="InParanoid" id="O81007"/>
<dbReference type="OMA" id="ENTTEMY"/>
<dbReference type="OrthoDB" id="407658at2759"/>
<dbReference type="PhylomeDB" id="O81007"/>
<dbReference type="BioCyc" id="ARA:AT2G22900-MONOMER"/>
<dbReference type="PRO" id="PR:O81007"/>
<dbReference type="Proteomes" id="UP000006548">
    <property type="component" value="Chromosome 2"/>
</dbReference>
<dbReference type="ExpressionAtlas" id="O81007">
    <property type="expression patterns" value="baseline and differential"/>
</dbReference>
<dbReference type="GO" id="GO:0005768">
    <property type="term" value="C:endosome"/>
    <property type="evidence" value="ECO:0007005"/>
    <property type="project" value="TAIR"/>
</dbReference>
<dbReference type="GO" id="GO:0005794">
    <property type="term" value="C:Golgi apparatus"/>
    <property type="evidence" value="ECO:0000314"/>
    <property type="project" value="TAIR"/>
</dbReference>
<dbReference type="GO" id="GO:0000139">
    <property type="term" value="C:Golgi membrane"/>
    <property type="evidence" value="ECO:0007669"/>
    <property type="project" value="UniProtKB-SubCell"/>
</dbReference>
<dbReference type="GO" id="GO:0005802">
    <property type="term" value="C:trans-Golgi network"/>
    <property type="evidence" value="ECO:0007005"/>
    <property type="project" value="TAIR"/>
</dbReference>
<dbReference type="GO" id="GO:0008378">
    <property type="term" value="F:galactosyltransferase activity"/>
    <property type="evidence" value="ECO:0000315"/>
    <property type="project" value="TAIR"/>
</dbReference>
<dbReference type="GO" id="GO:0000976">
    <property type="term" value="F:transcription cis-regulatory region binding"/>
    <property type="evidence" value="ECO:0000353"/>
    <property type="project" value="TAIR"/>
</dbReference>
<dbReference type="GO" id="GO:0010392">
    <property type="term" value="P:galactoglucomannan metabolic process"/>
    <property type="evidence" value="ECO:0000315"/>
    <property type="project" value="TAIR"/>
</dbReference>
<dbReference type="GO" id="GO:0051070">
    <property type="term" value="P:galactomannan biosynthetic process"/>
    <property type="evidence" value="ECO:0000315"/>
    <property type="project" value="TAIR"/>
</dbReference>
<dbReference type="GO" id="GO:0010192">
    <property type="term" value="P:mucilage biosynthetic process"/>
    <property type="evidence" value="ECO:0000315"/>
    <property type="project" value="TAIR"/>
</dbReference>
<dbReference type="GO" id="GO:0010214">
    <property type="term" value="P:seed coat development"/>
    <property type="evidence" value="ECO:0000270"/>
    <property type="project" value="TAIR"/>
</dbReference>
<dbReference type="FunFam" id="3.90.550.10:FF:000127">
    <property type="entry name" value="Probable glycosyltransferase 7"/>
    <property type="match status" value="1"/>
</dbReference>
<dbReference type="Gene3D" id="3.90.550.10">
    <property type="entry name" value="Spore Coat Polysaccharide Biosynthesis Protein SpsA, Chain A"/>
    <property type="match status" value="1"/>
</dbReference>
<dbReference type="InterPro" id="IPR008630">
    <property type="entry name" value="Glyco_trans_34"/>
</dbReference>
<dbReference type="InterPro" id="IPR029044">
    <property type="entry name" value="Nucleotide-diphossugar_trans"/>
</dbReference>
<dbReference type="PANTHER" id="PTHR31311:SF3">
    <property type="entry name" value="GLYCOSYLTRANSFERASE 7-RELATED"/>
    <property type="match status" value="1"/>
</dbReference>
<dbReference type="PANTHER" id="PTHR31311">
    <property type="entry name" value="XYLOGLUCAN 6-XYLOSYLTRANSFERASE 5-RELATED-RELATED"/>
    <property type="match status" value="1"/>
</dbReference>
<dbReference type="Pfam" id="PF05637">
    <property type="entry name" value="Glyco_transf_34"/>
    <property type="match status" value="1"/>
</dbReference>
<keyword id="KW-0325">Glycoprotein</keyword>
<keyword id="KW-0328">Glycosyltransferase</keyword>
<keyword id="KW-0333">Golgi apparatus</keyword>
<keyword id="KW-0472">Membrane</keyword>
<keyword id="KW-1185">Reference proteome</keyword>
<keyword id="KW-0735">Signal-anchor</keyword>
<keyword id="KW-0808">Transferase</keyword>
<keyword id="KW-0812">Transmembrane</keyword>
<keyword id="KW-1133">Transmembrane helix</keyword>
<accession>O81007</accession>
<accession>W8Q3G3</accession>
<gene>
    <name type="primary">GT7</name>
    <name type="synonym">GTL6</name>
    <name type="ordered locus">At2g22900</name>
    <name type="ORF">T20K9.110</name>
</gene>
<evidence type="ECO:0000250" key="1">
    <source>
        <dbReference type="UniProtKB" id="Q9CA75"/>
    </source>
</evidence>
<evidence type="ECO:0000255" key="2"/>
<evidence type="ECO:0000305" key="3"/>
<feature type="chain" id="PRO_0000215175" description="Putative glycosyltransferase 7">
    <location>
        <begin position="1"/>
        <end position="449"/>
    </location>
</feature>
<feature type="topological domain" description="Cytoplasmic" evidence="2">
    <location>
        <begin position="1"/>
        <end position="32"/>
    </location>
</feature>
<feature type="transmembrane region" description="Helical; Signal-anchor for type II membrane protein" evidence="2">
    <location>
        <begin position="33"/>
        <end position="53"/>
    </location>
</feature>
<feature type="topological domain" description="Lumenal" evidence="2">
    <location>
        <begin position="54"/>
        <end position="449"/>
    </location>
</feature>
<feature type="glycosylation site" description="N-linked (GlcNAc...) asparagine" evidence="2">
    <location>
        <position position="59"/>
    </location>
</feature>
<feature type="glycosylation site" description="N-linked (GlcNAc...) asparagine" evidence="2">
    <location>
        <position position="123"/>
    </location>
</feature>
<feature type="glycosylation site" description="N-linked (GlcNAc...) asparagine" evidence="2">
    <location>
        <position position="332"/>
    </location>
</feature>
<name>GT7_ARATH</name>
<comment type="function">
    <text evidence="1">Probable glycosyltransferase that may be involved in the biosynthesis of xyloglucan.</text>
</comment>
<comment type="subcellular location">
    <subcellularLocation>
        <location evidence="3">Golgi apparatus membrane</location>
        <topology evidence="3">Single-pass type II membrane protein</topology>
    </subcellularLocation>
</comment>
<comment type="similarity">
    <text evidence="3">Belongs to the glycosyltransferase 34 family.</text>
</comment>